<gene>
    <name type="primary">NPY</name>
</gene>
<keyword id="KW-0002">3D-structure</keyword>
<keyword id="KW-0027">Amidation</keyword>
<keyword id="KW-0165">Cleavage on pair of basic residues</keyword>
<keyword id="KW-0968">Cytoplasmic vesicle</keyword>
<keyword id="KW-0527">Neuropeptide</keyword>
<keyword id="KW-0597">Phosphoprotein</keyword>
<keyword id="KW-1185">Reference proteome</keyword>
<keyword id="KW-0964">Secreted</keyword>
<keyword id="KW-0732">Signal</keyword>
<sequence length="97" mass="10840">MLGSKRLGLSGLTLALSLLVCLGALAEAYPSKPDNPGEDAPAEDMARYYSALRHYINLITRQRYGKRSSPETLISDLLMRESTENVPRTRLEDPSMW</sequence>
<comment type="function">
    <text evidence="1">NPY is implicated in the control of feeding and in secretion of gonadotrophin-release hormone.</text>
</comment>
<comment type="subcellular location">
    <subcellularLocation>
        <location>Secreted</location>
    </subcellularLocation>
    <subcellularLocation>
        <location evidence="3">Cytoplasmic vesicle</location>
        <location evidence="3">Secretory vesicle</location>
        <location evidence="3">Neuronal dense core vesicle</location>
    </subcellularLocation>
</comment>
<comment type="PTM">
    <text evidence="2">The neuropeptide Y form is cleaved at Pro-30 by the prolyl endopeptidase FAP (seprase) activity (in vitro).</text>
</comment>
<comment type="similarity">
    <text evidence="4">Belongs to the NPY family.</text>
</comment>
<feature type="signal peptide" evidence="1">
    <location>
        <begin position="1"/>
        <end position="28"/>
    </location>
</feature>
<feature type="peptide" id="PRO_0000025323" description="Neuropeptide Y">
    <location>
        <begin position="29"/>
        <end position="64"/>
    </location>
</feature>
<feature type="peptide" id="PRO_0000025324" description="C-flanking peptide of NPY">
    <location>
        <begin position="68"/>
        <end position="97"/>
    </location>
</feature>
<feature type="site" description="Cleavage; by FAP" evidence="2">
    <location>
        <begin position="30"/>
        <end position="31"/>
    </location>
</feature>
<feature type="modified residue" description="Tyrosine amide" evidence="2">
    <location>
        <position position="64"/>
    </location>
</feature>
<feature type="modified residue" description="Phosphothreonine" evidence="2">
    <location>
        <position position="83"/>
    </location>
</feature>
<accession>Q9XSW6</accession>
<proteinExistence type="evidence at protein level"/>
<protein>
    <recommendedName>
        <fullName>Pro-neuropeptide Y</fullName>
    </recommendedName>
    <component>
        <recommendedName>
            <fullName>Neuropeptide Y</fullName>
        </recommendedName>
        <alternativeName>
            <fullName>Neuropeptide tyrosine</fullName>
            <shortName>NPY</shortName>
        </alternativeName>
    </component>
    <component>
        <recommendedName>
            <fullName>C-flanking peptide of NPY</fullName>
            <shortName>CPON</shortName>
        </recommendedName>
    </component>
</protein>
<dbReference type="EMBL" id="AF162280">
    <property type="protein sequence ID" value="AAD43583.1"/>
    <property type="molecule type" value="mRNA"/>
</dbReference>
<dbReference type="RefSeq" id="NP_001027986.1">
    <property type="nucleotide sequence ID" value="NM_001032814.1"/>
</dbReference>
<dbReference type="PDB" id="1R9N">
    <property type="method" value="X-ray"/>
    <property type="resolution" value="2.30 A"/>
    <property type="chains" value="E/F/G/H=29-38"/>
</dbReference>
<dbReference type="PDBsum" id="1R9N"/>
<dbReference type="SMR" id="Q9XSW6"/>
<dbReference type="FunCoup" id="Q9XSW6">
    <property type="interactions" value="640"/>
</dbReference>
<dbReference type="STRING" id="9544.ENSMMUP00000070707"/>
<dbReference type="PaxDb" id="9544-ENSMMUP00000012853"/>
<dbReference type="Ensembl" id="ENSMMUT00000071340.2">
    <property type="protein sequence ID" value="ENSMMUP00000051181.1"/>
    <property type="gene ID" value="ENSMMUG00000009818.3"/>
</dbReference>
<dbReference type="GeneID" id="574114"/>
<dbReference type="KEGG" id="mcc:574114"/>
<dbReference type="CTD" id="4852"/>
<dbReference type="VEuPathDB" id="HostDB:ENSMMUG00000009818"/>
<dbReference type="VGNC" id="VGNC:75393">
    <property type="gene designation" value="NPY"/>
</dbReference>
<dbReference type="eggNOG" id="ENOG502S2BU">
    <property type="taxonomic scope" value="Eukaryota"/>
</dbReference>
<dbReference type="GeneTree" id="ENSGT00940000156475"/>
<dbReference type="HOGENOM" id="CLU_162379_1_0_1"/>
<dbReference type="InParanoid" id="Q9XSW6"/>
<dbReference type="OrthoDB" id="9852947at2759"/>
<dbReference type="TreeFam" id="TF332778"/>
<dbReference type="EvolutionaryTrace" id="Q9XSW6"/>
<dbReference type="Proteomes" id="UP000006718">
    <property type="component" value="Chromosome 3"/>
</dbReference>
<dbReference type="Bgee" id="ENSMMUG00000009818">
    <property type="expression patterns" value="Expressed in Ammon's horn and 13 other cell types or tissues"/>
</dbReference>
<dbReference type="ExpressionAtlas" id="Q9XSW6">
    <property type="expression patterns" value="baseline"/>
</dbReference>
<dbReference type="GO" id="GO:0005615">
    <property type="term" value="C:extracellular space"/>
    <property type="evidence" value="ECO:0000250"/>
    <property type="project" value="HGNC-UCL"/>
</dbReference>
<dbReference type="GO" id="GO:0098992">
    <property type="term" value="C:neuronal dense core vesicle"/>
    <property type="evidence" value="ECO:0000250"/>
    <property type="project" value="UniProtKB"/>
</dbReference>
<dbReference type="GO" id="GO:0005184">
    <property type="term" value="F:neuropeptide hormone activity"/>
    <property type="evidence" value="ECO:0000318"/>
    <property type="project" value="GO_Central"/>
</dbReference>
<dbReference type="GO" id="GO:0031841">
    <property type="term" value="F:neuropeptide Y receptor binding"/>
    <property type="evidence" value="ECO:0000318"/>
    <property type="project" value="GO_Central"/>
</dbReference>
<dbReference type="GO" id="GO:0008343">
    <property type="term" value="P:adult feeding behavior"/>
    <property type="evidence" value="ECO:0000250"/>
    <property type="project" value="HGNC-UCL"/>
</dbReference>
<dbReference type="GO" id="GO:0007631">
    <property type="term" value="P:feeding behavior"/>
    <property type="evidence" value="ECO:0000318"/>
    <property type="project" value="GO_Central"/>
</dbReference>
<dbReference type="GO" id="GO:0007218">
    <property type="term" value="P:neuropeptide signaling pathway"/>
    <property type="evidence" value="ECO:0000318"/>
    <property type="project" value="GO_Central"/>
</dbReference>
<dbReference type="GO" id="GO:0032100">
    <property type="term" value="P:positive regulation of appetite"/>
    <property type="evidence" value="ECO:0000250"/>
    <property type="project" value="HGNC-UCL"/>
</dbReference>
<dbReference type="CDD" id="cd00126">
    <property type="entry name" value="PAH"/>
    <property type="match status" value="1"/>
</dbReference>
<dbReference type="Gene3D" id="6.10.250.900">
    <property type="match status" value="1"/>
</dbReference>
<dbReference type="InterPro" id="IPR001955">
    <property type="entry name" value="Pancreatic_hormone-like"/>
</dbReference>
<dbReference type="InterPro" id="IPR020392">
    <property type="entry name" value="Pancreatic_hormone-like_CS"/>
</dbReference>
<dbReference type="PANTHER" id="PTHR10533">
    <property type="entry name" value="NEUROPEPTIDE Y/PANCREATIC HORMONE/PEPTIDE YY"/>
    <property type="match status" value="1"/>
</dbReference>
<dbReference type="PANTHER" id="PTHR10533:SF5">
    <property type="entry name" value="PRO-NEUROPEPTIDE Y"/>
    <property type="match status" value="1"/>
</dbReference>
<dbReference type="Pfam" id="PF00159">
    <property type="entry name" value="Hormone_3"/>
    <property type="match status" value="1"/>
</dbReference>
<dbReference type="PRINTS" id="PR00278">
    <property type="entry name" value="PANCHORMONE"/>
</dbReference>
<dbReference type="SMART" id="SM00309">
    <property type="entry name" value="PAH"/>
    <property type="match status" value="1"/>
</dbReference>
<dbReference type="PROSITE" id="PS00265">
    <property type="entry name" value="PANCREATIC_HORMONE_1"/>
    <property type="match status" value="1"/>
</dbReference>
<dbReference type="PROSITE" id="PS50276">
    <property type="entry name" value="PANCREATIC_HORMONE_2"/>
    <property type="match status" value="1"/>
</dbReference>
<organism>
    <name type="scientific">Macaca mulatta</name>
    <name type="common">Rhesus macaque</name>
    <dbReference type="NCBI Taxonomy" id="9544"/>
    <lineage>
        <taxon>Eukaryota</taxon>
        <taxon>Metazoa</taxon>
        <taxon>Chordata</taxon>
        <taxon>Craniata</taxon>
        <taxon>Vertebrata</taxon>
        <taxon>Euteleostomi</taxon>
        <taxon>Mammalia</taxon>
        <taxon>Eutheria</taxon>
        <taxon>Euarchontoglires</taxon>
        <taxon>Primates</taxon>
        <taxon>Haplorrhini</taxon>
        <taxon>Catarrhini</taxon>
        <taxon>Cercopithecidae</taxon>
        <taxon>Cercopithecinae</taxon>
        <taxon>Macaca</taxon>
    </lineage>
</organism>
<evidence type="ECO:0000250" key="1"/>
<evidence type="ECO:0000250" key="2">
    <source>
        <dbReference type="UniProtKB" id="P01303"/>
    </source>
</evidence>
<evidence type="ECO:0000250" key="3">
    <source>
        <dbReference type="UniProtKB" id="P07808"/>
    </source>
</evidence>
<evidence type="ECO:0000305" key="4"/>
<name>NPY_MACMU</name>
<reference key="1">
    <citation type="submission" date="1999-06" db="EMBL/GenBank/DDBJ databases">
        <title>Developmental changes in NPY mRNA expression in female rhesus monkeys.</title>
        <authorList>
            <person name="Abler L.A."/>
            <person name="Golos T.G."/>
            <person name="Terasawa E."/>
        </authorList>
    </citation>
    <scope>NUCLEOTIDE SEQUENCE [MRNA]</scope>
</reference>
<reference key="2">
    <citation type="journal article" date="2004" name="Protein Sci.">
        <title>Crystal structure of human dipeptidyl peptidase IV in complex with a decapeptide reveals details on substrate specificity and tetrahedral intermediate formation.</title>
        <authorList>
            <person name="Aertgeerts K."/>
            <person name="Ye S."/>
            <person name="Tennant M.G."/>
            <person name="Kraus M.L."/>
            <person name="Rogers J."/>
            <person name="Sang B.-C."/>
            <person name="Skene R.J."/>
            <person name="Webb D.R."/>
            <person name="Prasad G.S."/>
        </authorList>
    </citation>
    <scope>X-RAY CRYSTALLOGRAPHY (2.3 ANGSTROMS) OF 29-38 IN COMPLEX WITH DPP4</scope>
</reference>